<proteinExistence type="inferred from homology"/>
<organism>
    <name type="scientific">Salmonella gallinarum (strain 287/91 / NCTC 13346)</name>
    <dbReference type="NCBI Taxonomy" id="550538"/>
    <lineage>
        <taxon>Bacteria</taxon>
        <taxon>Pseudomonadati</taxon>
        <taxon>Pseudomonadota</taxon>
        <taxon>Gammaproteobacteria</taxon>
        <taxon>Enterobacterales</taxon>
        <taxon>Enterobacteriaceae</taxon>
        <taxon>Salmonella</taxon>
    </lineage>
</organism>
<name>EFTS_SALG2</name>
<feature type="chain" id="PRO_1000116784" description="Elongation factor Ts">
    <location>
        <begin position="1"/>
        <end position="283"/>
    </location>
</feature>
<feature type="region of interest" description="Involved in Mg(2+) ion dislocation from EF-Tu" evidence="1">
    <location>
        <begin position="80"/>
        <end position="83"/>
    </location>
</feature>
<sequence>MAEITASLVKELRERTGAGMMDCKKALTEANGDIELAIENMRKSGAIKAAKKAGNVAADGVIKTKIDGNVAFILEVNCQTDFVAKDAGFQAFADKVLDAAVAGKITDVEVLKAQFEEERVALVAKIGENINIRRVASLEGDVLGSYQHGARIGVLVAAKGADEELVKQLAMHVAASRPEFVKPEDVSADVVEKEYQVQLDIAMQSGKPKEIAEKMVEGRMKKFTGEVSLTGQPFVMEPSKSVGQLLKEHNADVTGFIRFEVGEGIEKVETDFAAEVAAMSKQS</sequence>
<evidence type="ECO:0000255" key="1">
    <source>
        <dbReference type="HAMAP-Rule" id="MF_00050"/>
    </source>
</evidence>
<reference key="1">
    <citation type="journal article" date="2008" name="Genome Res.">
        <title>Comparative genome analysis of Salmonella enteritidis PT4 and Salmonella gallinarum 287/91 provides insights into evolutionary and host adaptation pathways.</title>
        <authorList>
            <person name="Thomson N.R."/>
            <person name="Clayton D.J."/>
            <person name="Windhorst D."/>
            <person name="Vernikos G."/>
            <person name="Davidson S."/>
            <person name="Churcher C."/>
            <person name="Quail M.A."/>
            <person name="Stevens M."/>
            <person name="Jones M.A."/>
            <person name="Watson M."/>
            <person name="Barron A."/>
            <person name="Layton A."/>
            <person name="Pickard D."/>
            <person name="Kingsley R.A."/>
            <person name="Bignell A."/>
            <person name="Clark L."/>
            <person name="Harris B."/>
            <person name="Ormond D."/>
            <person name="Abdellah Z."/>
            <person name="Brooks K."/>
            <person name="Cherevach I."/>
            <person name="Chillingworth T."/>
            <person name="Woodward J."/>
            <person name="Norberczak H."/>
            <person name="Lord A."/>
            <person name="Arrowsmith C."/>
            <person name="Jagels K."/>
            <person name="Moule S."/>
            <person name="Mungall K."/>
            <person name="Saunders M."/>
            <person name="Whitehead S."/>
            <person name="Chabalgoity J.A."/>
            <person name="Maskell D."/>
            <person name="Humphreys T."/>
            <person name="Roberts M."/>
            <person name="Barrow P.A."/>
            <person name="Dougan G."/>
            <person name="Parkhill J."/>
        </authorList>
    </citation>
    <scope>NUCLEOTIDE SEQUENCE [LARGE SCALE GENOMIC DNA]</scope>
    <source>
        <strain>287/91 / NCTC 13346</strain>
    </source>
</reference>
<gene>
    <name evidence="1" type="primary">tsf</name>
    <name type="ordered locus">SG0221</name>
</gene>
<accession>B5RHF5</accession>
<dbReference type="EMBL" id="AM933173">
    <property type="protein sequence ID" value="CAR36128.1"/>
    <property type="molecule type" value="Genomic_DNA"/>
</dbReference>
<dbReference type="RefSeq" id="WP_000808108.1">
    <property type="nucleotide sequence ID" value="NC_011274.1"/>
</dbReference>
<dbReference type="SMR" id="B5RHF5"/>
<dbReference type="KEGG" id="seg:SG0221"/>
<dbReference type="HOGENOM" id="CLU_047155_0_2_6"/>
<dbReference type="Proteomes" id="UP000008321">
    <property type="component" value="Chromosome"/>
</dbReference>
<dbReference type="GO" id="GO:0005737">
    <property type="term" value="C:cytoplasm"/>
    <property type="evidence" value="ECO:0007669"/>
    <property type="project" value="UniProtKB-SubCell"/>
</dbReference>
<dbReference type="GO" id="GO:0003746">
    <property type="term" value="F:translation elongation factor activity"/>
    <property type="evidence" value="ECO:0007669"/>
    <property type="project" value="UniProtKB-UniRule"/>
</dbReference>
<dbReference type="CDD" id="cd14275">
    <property type="entry name" value="UBA_EF-Ts"/>
    <property type="match status" value="1"/>
</dbReference>
<dbReference type="FunFam" id="1.10.286.20:FF:000001">
    <property type="entry name" value="Elongation factor Ts"/>
    <property type="match status" value="1"/>
</dbReference>
<dbReference type="FunFam" id="1.10.8.10:FF:000001">
    <property type="entry name" value="Elongation factor Ts"/>
    <property type="match status" value="1"/>
</dbReference>
<dbReference type="FunFam" id="3.30.479.20:FF:000001">
    <property type="entry name" value="Elongation factor Ts"/>
    <property type="match status" value="1"/>
</dbReference>
<dbReference type="Gene3D" id="1.10.286.20">
    <property type="match status" value="1"/>
</dbReference>
<dbReference type="Gene3D" id="1.10.8.10">
    <property type="entry name" value="DNA helicase RuvA subunit, C-terminal domain"/>
    <property type="match status" value="1"/>
</dbReference>
<dbReference type="Gene3D" id="3.30.479.20">
    <property type="entry name" value="Elongation factor Ts, dimerisation domain"/>
    <property type="match status" value="2"/>
</dbReference>
<dbReference type="HAMAP" id="MF_00050">
    <property type="entry name" value="EF_Ts"/>
    <property type="match status" value="1"/>
</dbReference>
<dbReference type="InterPro" id="IPR036402">
    <property type="entry name" value="EF-Ts_dimer_sf"/>
</dbReference>
<dbReference type="InterPro" id="IPR001816">
    <property type="entry name" value="Transl_elong_EFTs/EF1B"/>
</dbReference>
<dbReference type="InterPro" id="IPR014039">
    <property type="entry name" value="Transl_elong_EFTs/EF1B_dimer"/>
</dbReference>
<dbReference type="InterPro" id="IPR018101">
    <property type="entry name" value="Transl_elong_Ts_CS"/>
</dbReference>
<dbReference type="InterPro" id="IPR009060">
    <property type="entry name" value="UBA-like_sf"/>
</dbReference>
<dbReference type="NCBIfam" id="TIGR00116">
    <property type="entry name" value="tsf"/>
    <property type="match status" value="1"/>
</dbReference>
<dbReference type="PANTHER" id="PTHR11741">
    <property type="entry name" value="ELONGATION FACTOR TS"/>
    <property type="match status" value="1"/>
</dbReference>
<dbReference type="PANTHER" id="PTHR11741:SF0">
    <property type="entry name" value="ELONGATION FACTOR TS, MITOCHONDRIAL"/>
    <property type="match status" value="1"/>
</dbReference>
<dbReference type="Pfam" id="PF00889">
    <property type="entry name" value="EF_TS"/>
    <property type="match status" value="1"/>
</dbReference>
<dbReference type="SUPFAM" id="SSF54713">
    <property type="entry name" value="Elongation factor Ts (EF-Ts), dimerisation domain"/>
    <property type="match status" value="2"/>
</dbReference>
<dbReference type="SUPFAM" id="SSF46934">
    <property type="entry name" value="UBA-like"/>
    <property type="match status" value="1"/>
</dbReference>
<dbReference type="PROSITE" id="PS01126">
    <property type="entry name" value="EF_TS_1"/>
    <property type="match status" value="1"/>
</dbReference>
<dbReference type="PROSITE" id="PS01127">
    <property type="entry name" value="EF_TS_2"/>
    <property type="match status" value="1"/>
</dbReference>
<protein>
    <recommendedName>
        <fullName evidence="1">Elongation factor Ts</fullName>
        <shortName evidence="1">EF-Ts</shortName>
    </recommendedName>
</protein>
<comment type="function">
    <text evidence="1">Associates with the EF-Tu.GDP complex and induces the exchange of GDP to GTP. It remains bound to the aminoacyl-tRNA.EF-Tu.GTP complex up to the GTP hydrolysis stage on the ribosome.</text>
</comment>
<comment type="subcellular location">
    <subcellularLocation>
        <location evidence="1">Cytoplasm</location>
    </subcellularLocation>
</comment>
<comment type="similarity">
    <text evidence="1">Belongs to the EF-Ts family.</text>
</comment>
<keyword id="KW-0963">Cytoplasm</keyword>
<keyword id="KW-0251">Elongation factor</keyword>
<keyword id="KW-0648">Protein biosynthesis</keyword>